<proteinExistence type="evidence at transcript level"/>
<name>SMC21_ARATH</name>
<protein>
    <recommendedName>
        <fullName>Structural maintenance of chromosomes protein 2-1</fullName>
        <shortName>AtSMC2-1</shortName>
    </recommendedName>
    <alternativeName>
        <fullName>Chromosome-associated protein E-1</fullName>
        <shortName>AtCAP-E1</shortName>
    </alternativeName>
    <alternativeName>
        <fullName>Protein TITAN 3</fullName>
    </alternativeName>
</protein>
<dbReference type="EMBL" id="AF271730">
    <property type="protein sequence ID" value="AAG27593.2"/>
    <property type="status" value="ALT_FRAME"/>
    <property type="molecule type" value="Genomic_DNA"/>
</dbReference>
<dbReference type="EMBL" id="AF271731">
    <property type="protein sequence ID" value="AAK58634.1"/>
    <property type="status" value="ALT_FRAME"/>
    <property type="molecule type" value="mRNA"/>
</dbReference>
<dbReference type="EMBL" id="AF306547">
    <property type="protein sequence ID" value="AAG53093.1"/>
    <property type="molecule type" value="mRNA"/>
</dbReference>
<dbReference type="EMBL" id="AB015469">
    <property type="protein sequence ID" value="BAB11491.1"/>
    <property type="molecule type" value="Genomic_DNA"/>
</dbReference>
<dbReference type="EMBL" id="AB019235">
    <property type="protein sequence ID" value="BAB11491.1"/>
    <property type="status" value="JOINED"/>
    <property type="molecule type" value="Genomic_DNA"/>
</dbReference>
<dbReference type="EMBL" id="CP002688">
    <property type="protein sequence ID" value="AED97605.1"/>
    <property type="molecule type" value="Genomic_DNA"/>
</dbReference>
<dbReference type="RefSeq" id="NP_201047.1">
    <property type="nucleotide sequence ID" value="NM_125635.3"/>
</dbReference>
<dbReference type="SMR" id="Q9C5Y4"/>
<dbReference type="BioGRID" id="21606">
    <property type="interactions" value="5"/>
</dbReference>
<dbReference type="FunCoup" id="Q9C5Y4">
    <property type="interactions" value="3558"/>
</dbReference>
<dbReference type="STRING" id="3702.Q9C5Y4"/>
<dbReference type="iPTMnet" id="Q9C5Y4"/>
<dbReference type="PaxDb" id="3702-AT5G62410.1"/>
<dbReference type="ProteomicsDB" id="228025"/>
<dbReference type="EnsemblPlants" id="AT5G62410.1">
    <property type="protein sequence ID" value="AT5G62410.1"/>
    <property type="gene ID" value="AT5G62410"/>
</dbReference>
<dbReference type="GeneID" id="836362"/>
<dbReference type="Gramene" id="AT5G62410.1">
    <property type="protein sequence ID" value="AT5G62410.1"/>
    <property type="gene ID" value="AT5G62410"/>
</dbReference>
<dbReference type="KEGG" id="ath:AT5G62410"/>
<dbReference type="Araport" id="AT5G62410"/>
<dbReference type="TAIR" id="AT5G62410">
    <property type="gene designation" value="SMC2"/>
</dbReference>
<dbReference type="eggNOG" id="KOG0933">
    <property type="taxonomic scope" value="Eukaryota"/>
</dbReference>
<dbReference type="HOGENOM" id="CLU_001042_9_0_1"/>
<dbReference type="InParanoid" id="Q9C5Y4"/>
<dbReference type="OMA" id="THNKIAM"/>
<dbReference type="PhylomeDB" id="Q9C5Y4"/>
<dbReference type="PRO" id="PR:Q9C5Y4"/>
<dbReference type="Proteomes" id="UP000006548">
    <property type="component" value="Chromosome 5"/>
</dbReference>
<dbReference type="ExpressionAtlas" id="Q9C5Y4">
    <property type="expression patterns" value="baseline and differential"/>
</dbReference>
<dbReference type="GO" id="GO:0000796">
    <property type="term" value="C:condensin complex"/>
    <property type="evidence" value="ECO:0000250"/>
    <property type="project" value="TAIR"/>
</dbReference>
<dbReference type="GO" id="GO:0005634">
    <property type="term" value="C:nucleus"/>
    <property type="evidence" value="ECO:0007669"/>
    <property type="project" value="UniProtKB-SubCell"/>
</dbReference>
<dbReference type="GO" id="GO:0005524">
    <property type="term" value="F:ATP binding"/>
    <property type="evidence" value="ECO:0007669"/>
    <property type="project" value="UniProtKB-KW"/>
</dbReference>
<dbReference type="GO" id="GO:0016887">
    <property type="term" value="F:ATP hydrolysis activity"/>
    <property type="evidence" value="ECO:0007669"/>
    <property type="project" value="InterPro"/>
</dbReference>
<dbReference type="GO" id="GO:0051301">
    <property type="term" value="P:cell division"/>
    <property type="evidence" value="ECO:0007669"/>
    <property type="project" value="UniProtKB-KW"/>
</dbReference>
<dbReference type="GO" id="GO:0030261">
    <property type="term" value="P:chromosome condensation"/>
    <property type="evidence" value="ECO:0007669"/>
    <property type="project" value="UniProtKB-KW"/>
</dbReference>
<dbReference type="GO" id="GO:0051321">
    <property type="term" value="P:meiotic cell cycle"/>
    <property type="evidence" value="ECO:0007669"/>
    <property type="project" value="UniProtKB-KW"/>
</dbReference>
<dbReference type="CDD" id="cd03273">
    <property type="entry name" value="ABC_SMC2_euk"/>
    <property type="match status" value="1"/>
</dbReference>
<dbReference type="FunFam" id="1.20.1060.20:FF:000005">
    <property type="entry name" value="Structural maintenance of chromosomes 2"/>
    <property type="match status" value="1"/>
</dbReference>
<dbReference type="FunFam" id="3.40.50.300:FF:000278">
    <property type="entry name" value="Structural maintenance of chromosomes 2"/>
    <property type="match status" value="1"/>
</dbReference>
<dbReference type="FunFam" id="3.40.50.300:FF:000385">
    <property type="entry name" value="Structural maintenance of chromosomes 2"/>
    <property type="match status" value="1"/>
</dbReference>
<dbReference type="Gene3D" id="1.20.1060.20">
    <property type="match status" value="1"/>
</dbReference>
<dbReference type="Gene3D" id="1.20.5.1700">
    <property type="match status" value="1"/>
</dbReference>
<dbReference type="Gene3D" id="3.30.70.1620">
    <property type="match status" value="1"/>
</dbReference>
<dbReference type="Gene3D" id="3.40.50.300">
    <property type="entry name" value="P-loop containing nucleotide triphosphate hydrolases"/>
    <property type="match status" value="2"/>
</dbReference>
<dbReference type="InterPro" id="IPR027417">
    <property type="entry name" value="P-loop_NTPase"/>
</dbReference>
<dbReference type="InterPro" id="IPR003395">
    <property type="entry name" value="RecF/RecN/SMC_N"/>
</dbReference>
<dbReference type="InterPro" id="IPR024704">
    <property type="entry name" value="SMC"/>
</dbReference>
<dbReference type="InterPro" id="IPR027120">
    <property type="entry name" value="Smc2_ABC"/>
</dbReference>
<dbReference type="InterPro" id="IPR010935">
    <property type="entry name" value="SMC_hinge"/>
</dbReference>
<dbReference type="InterPro" id="IPR036277">
    <property type="entry name" value="SMC_hinge_sf"/>
</dbReference>
<dbReference type="PANTHER" id="PTHR43977">
    <property type="entry name" value="STRUCTURAL MAINTENANCE OF CHROMOSOMES PROTEIN 3"/>
    <property type="match status" value="1"/>
</dbReference>
<dbReference type="Pfam" id="PF06470">
    <property type="entry name" value="SMC_hinge"/>
    <property type="match status" value="1"/>
</dbReference>
<dbReference type="Pfam" id="PF02463">
    <property type="entry name" value="SMC_N"/>
    <property type="match status" value="1"/>
</dbReference>
<dbReference type="PIRSF" id="PIRSF005719">
    <property type="entry name" value="SMC"/>
    <property type="match status" value="1"/>
</dbReference>
<dbReference type="SMART" id="SM00968">
    <property type="entry name" value="SMC_hinge"/>
    <property type="match status" value="1"/>
</dbReference>
<dbReference type="SUPFAM" id="SSF52540">
    <property type="entry name" value="P-loop containing nucleoside triphosphate hydrolases"/>
    <property type="match status" value="1"/>
</dbReference>
<dbReference type="SUPFAM" id="SSF75553">
    <property type="entry name" value="Smc hinge domain"/>
    <property type="match status" value="1"/>
</dbReference>
<feature type="chain" id="PRO_0000284894" description="Structural maintenance of chromosomes protein 2-1">
    <location>
        <begin position="1"/>
        <end position="1175"/>
    </location>
</feature>
<feature type="domain" description="Zinc-hook">
    <location>
        <begin position="2"/>
        <end position="1161"/>
    </location>
</feature>
<feature type="domain" description="SMC hinge">
    <location>
        <begin position="518"/>
        <end position="638"/>
    </location>
</feature>
<feature type="coiled-coil region" evidence="2">
    <location>
        <begin position="172"/>
        <end position="508"/>
    </location>
</feature>
<feature type="coiled-coil region" evidence="2">
    <location>
        <begin position="673"/>
        <end position="1028"/>
    </location>
</feature>
<feature type="binding site" evidence="2">
    <location>
        <begin position="32"/>
        <end position="39"/>
    </location>
    <ligand>
        <name>ATP</name>
        <dbReference type="ChEBI" id="CHEBI:30616"/>
    </ligand>
</feature>
<feature type="sequence conflict" description="In Ref. 1; AAK58634/AAG27593." evidence="5" ref="1">
    <original>I</original>
    <variation>V</variation>
    <location>
        <position position="107"/>
    </location>
</feature>
<feature type="sequence conflict" description="In Ref. 2; AAG53093." evidence="5" ref="2">
    <original>E</original>
    <variation>K</variation>
    <location>
        <position position="213"/>
    </location>
</feature>
<feature type="sequence conflict" description="In Ref. 1; AAK58634/AAG27593." evidence="5" ref="1">
    <original>G</original>
    <variation>GVG</variation>
    <location>
        <position position="254"/>
    </location>
</feature>
<feature type="sequence conflict" description="In Ref. 1; AAK58634/AAG27593 and 2; AAG53093." evidence="5" ref="1 2">
    <original>L</original>
    <variation>R</variation>
    <location>
        <position position="439"/>
    </location>
</feature>
<feature type="sequence conflict" description="In Ref. 2; AAG53093." evidence="5" ref="2">
    <original>E</original>
    <variation>G</variation>
    <location>
        <position position="602"/>
    </location>
</feature>
<feature type="sequence conflict" description="In Ref. 1; AAK58634/AAG27593." evidence="5" ref="1">
    <original>E</original>
    <variation>V</variation>
    <location>
        <position position="965"/>
    </location>
</feature>
<sequence length="1175" mass="132600">MHIKEICLEGFKSYATRTVVSGFDPHFNAITGLNGSGKSNILDSICFVLGITNLQQVRAANLQELVYKQGQAGITKATVSVTFDNSERHRSPLGYEEHPEITVTRQIVVGGRNKYLINGKLAQPSQVQNLFHSVQLNVNNPHFLIMQGRITKVLNMKPPEILSMLEEAAGTRMYENKKEAALKTLEKKQTKVDEINKLLDHEILPALEKLRKEKSQYMQWANGNAELDRLRRFCIAFEYVQAEKIRDNAVLGVGEMKAKLGKIDAETEKTQEEIQEFEKQIKALTQAKEASMGGEVKTLSEKVDSLAQEMTRESSKLNNKEDTLLGEKENVEKIVHSIEDLKKSVKERAAAVKKSEEGAADLKQRFQELSTTLEECEKEHQGVLAGKSSGDEEKCLEDQLRDAKIAVGTAGTELKQLKTKIEHCEKELKERKSQLMSKLEEAIEVENELGARKNDVEHVKKALESIPYNEGQMEALEKDRGAELEVVQRLEDKVRGLSAQLANFQFTYSDPVRNFDRSKVKGVVAKLIKVKDRSSMTALEVTAGGKLYDVVVDSEDTGKQLLQNGALRRRVTIIPLNKIQSYVVQPRVQQATARLVGKDNAELALSLVGYSDELKNAMEYVFGSTFVCKTTDVAKEVAFNRDIRTPSVTLEGDIFQPSGLLTGGSRKGGGDRLRKLHDLAEAESELQGHQKRLADVESQIKELQPLQMKFTDVYAQLELKTYDLSLFLKRAEQNEHHKLGEAVKKLEEELEEAKSQIKEKELAYKNCFDAVSKLENSIKDHDKNREGRLKDLEKNIKTIKAQMQAASKDLKSHENEKEKLVMEEEAMKQEQSSLESHLTSLETQISTLTSEVDEQRAKVDALQKIHDESLAELKLIHAKMKECDTQISGFVTDQEKCLQKLSDMKLERKKLENEVVRMETDHKDCSVKVDKLVEKHTWIASEKQLFGKGGTDYDFESCDPYVAREKLEKLQSDQSGLEKRVNKKVMAMFEKAEDEYNALISKKNTIENDKSKITKVIEELDEKKKETLKVTWVKVNQDFGSIFSTLLPGTMAKLEPPEDGNFLDGLEVRVAFGKVWKQSLSELSGGQRSLLALSLILALLLFKPAPLYILDEVDAALDLSHTQNIGRMIRAHFPHSQFIVVSLKEGMFNNANVLFRTKFVDGVSTVQRTVTKQTK</sequence>
<gene>
    <name type="primary">SMC2-1</name>
    <name type="synonym">CAP-E1</name>
    <name type="synonym">TTN3</name>
    <name type="ordered locus">At5g62410</name>
    <name type="ORF">MMI9.19</name>
    <name type="ORF">MMI9.24</name>
</gene>
<reference key="1">
    <citation type="journal article" date="2002" name="Plant J.">
        <title>Condensin and cohesin knockouts in Arabidopsis exhibit a titan seed phenotype.</title>
        <authorList>
            <person name="Liu C.-M."/>
            <person name="McElver J."/>
            <person name="Tzafrir I."/>
            <person name="Joosen R."/>
            <person name="Wittich P."/>
            <person name="Patton D."/>
            <person name="Van Lammeren A.A.M."/>
            <person name="Meinke D."/>
        </authorList>
    </citation>
    <scope>NUCLEOTIDE SEQUENCE [GENOMIC DNA / MRNA]</scope>
    <scope>FUNCTION</scope>
</reference>
<reference key="2">
    <citation type="journal article" date="2003" name="Development">
        <title>Mutations in Arabidopsis condensin genes disrupt embryogenesis, meristem organization and segregation of homologous chromosomes during meiosis.</title>
        <authorList>
            <person name="Siddiqui N.U."/>
            <person name="Stronghill P.E."/>
            <person name="Dengler R.E."/>
            <person name="Hasenkampf C.A."/>
            <person name="Riggs C.D."/>
        </authorList>
    </citation>
    <scope>NUCLEOTIDE SEQUENCE [MRNA]</scope>
    <scope>FUNCTION</scope>
    <scope>TISSUE SPECIFICITY</scope>
    <source>
        <strain>cv. Landsberg erecta</strain>
    </source>
</reference>
<reference key="3">
    <citation type="journal article" date="1998" name="DNA Res.">
        <title>Structural analysis of Arabidopsis thaliana chromosome 5. VII. Sequence features of the regions of 1,013,767 bp covered by sixteen physically assigned P1 and TAC clones.</title>
        <authorList>
            <person name="Nakamura Y."/>
            <person name="Sato S."/>
            <person name="Asamizu E."/>
            <person name="Kaneko T."/>
            <person name="Kotani H."/>
            <person name="Miyajima N."/>
            <person name="Tabata S."/>
        </authorList>
    </citation>
    <scope>NUCLEOTIDE SEQUENCE [LARGE SCALE GENOMIC DNA]</scope>
    <source>
        <strain>cv. Columbia</strain>
    </source>
</reference>
<reference key="4">
    <citation type="journal article" date="2000" name="DNA Res.">
        <title>Structural analysis of Arabidopsis thaliana chromosome 5. X. Sequence features of the regions of 3,076,755 bp covered by sixty P1 and TAC clones.</title>
        <authorList>
            <person name="Sato S."/>
            <person name="Nakamura Y."/>
            <person name="Kaneko T."/>
            <person name="Katoh T."/>
            <person name="Asamizu E."/>
            <person name="Kotani H."/>
            <person name="Tabata S."/>
        </authorList>
    </citation>
    <scope>NUCLEOTIDE SEQUENCE [LARGE SCALE GENOMIC DNA]</scope>
    <source>
        <strain>cv. Columbia</strain>
    </source>
</reference>
<reference key="5">
    <citation type="journal article" date="2017" name="Plant J.">
        <title>Araport11: a complete reannotation of the Arabidopsis thaliana reference genome.</title>
        <authorList>
            <person name="Cheng C.Y."/>
            <person name="Krishnakumar V."/>
            <person name="Chan A.P."/>
            <person name="Thibaud-Nissen F."/>
            <person name="Schobel S."/>
            <person name="Town C.D."/>
        </authorList>
    </citation>
    <scope>GENOME REANNOTATION</scope>
    <source>
        <strain>cv. Columbia</strain>
    </source>
</reference>
<evidence type="ECO:0000250" key="1"/>
<evidence type="ECO:0000255" key="2"/>
<evidence type="ECO:0000269" key="3">
    <source>
    </source>
</evidence>
<evidence type="ECO:0000269" key="4">
    <source>
    </source>
</evidence>
<evidence type="ECO:0000305" key="5"/>
<organism>
    <name type="scientific">Arabidopsis thaliana</name>
    <name type="common">Mouse-ear cress</name>
    <dbReference type="NCBI Taxonomy" id="3702"/>
    <lineage>
        <taxon>Eukaryota</taxon>
        <taxon>Viridiplantae</taxon>
        <taxon>Streptophyta</taxon>
        <taxon>Embryophyta</taxon>
        <taxon>Tracheophyta</taxon>
        <taxon>Spermatophyta</taxon>
        <taxon>Magnoliopsida</taxon>
        <taxon>eudicotyledons</taxon>
        <taxon>Gunneridae</taxon>
        <taxon>Pentapetalae</taxon>
        <taxon>rosids</taxon>
        <taxon>malvids</taxon>
        <taxon>Brassicales</taxon>
        <taxon>Brassicaceae</taxon>
        <taxon>Camelineae</taxon>
        <taxon>Arabidopsis</taxon>
    </lineage>
</organism>
<accession>Q9C5Y4</accession>
<accession>Q9FJK1</accession>
<accession>Q9FUY9</accession>
<comment type="function">
    <text evidence="3 4">Central component of the condensin complex, a complex required for conversion of interphase chromatin into mitotic-like condense chromosomes. The condensin complex probably introduces positive supercoils into relaxed DNA in the presence of type I topoisomerases and converts nicked DNA into positive knotted forms in the presence of type II topoisomerases. Also involved in chromosome segregation in meiosis.</text>
</comment>
<comment type="subunit">
    <text>Forms a heterodimer with SMC4. Component of the condensin complex, which contains the SMC2 and SMC4 heterodimer, and three non SMC subunits that probably regulate the complex: CAPH, CAPD2 and CAPG.</text>
</comment>
<comment type="subcellular location">
    <subcellularLocation>
        <location>Nucleus</location>
    </subcellularLocation>
    <text evidence="1">Associates with chromatin.</text>
</comment>
<comment type="tissue specificity">
    <text evidence="4">Highly expressed in roots and young floral buds.</text>
</comment>
<comment type="domain">
    <text>The SMC hinge domain, which separates the large intramolecular coiled coil regions, allows the heterodimerization with SMC4, forming a V-shaped heterodimer.</text>
</comment>
<comment type="similarity">
    <text evidence="5">Belongs to the SMC family. SMC2 subfamily.</text>
</comment>
<comment type="sequence caution" evidence="5">
    <conflict type="frameshift">
        <sequence resource="EMBL-CDS" id="AAG27593"/>
    </conflict>
</comment>
<comment type="sequence caution" evidence="5">
    <conflict type="frameshift">
        <sequence resource="EMBL-CDS" id="AAK58634"/>
    </conflict>
</comment>
<keyword id="KW-0067">ATP-binding</keyword>
<keyword id="KW-0131">Cell cycle</keyword>
<keyword id="KW-0132">Cell division</keyword>
<keyword id="KW-0175">Coiled coil</keyword>
<keyword id="KW-0226">DNA condensation</keyword>
<keyword id="KW-0469">Meiosis</keyword>
<keyword id="KW-0498">Mitosis</keyword>
<keyword id="KW-0547">Nucleotide-binding</keyword>
<keyword id="KW-0539">Nucleus</keyword>
<keyword id="KW-1185">Reference proteome</keyword>